<keyword id="KW-0217">Developmental protein</keyword>
<keyword id="KW-0225">Disease variant</keyword>
<keyword id="KW-0238">DNA-binding</keyword>
<keyword id="KW-0371">Homeobox</keyword>
<keyword id="KW-0539">Nucleus</keyword>
<keyword id="KW-1267">Proteomics identification</keyword>
<keyword id="KW-1185">Reference proteome</keyword>
<keyword id="KW-0804">Transcription</keyword>
<keyword id="KW-0805">Transcription regulation</keyword>
<feature type="chain" id="PRO_0000048812" description="Homeobox protein aristaless-like 3">
    <location>
        <begin position="1"/>
        <end position="343"/>
    </location>
</feature>
<feature type="DNA-binding region" description="Homeobox" evidence="2">
    <location>
        <begin position="153"/>
        <end position="212"/>
    </location>
</feature>
<feature type="region of interest" description="Disordered" evidence="3">
    <location>
        <begin position="1"/>
        <end position="104"/>
    </location>
</feature>
<feature type="sequence variant" id="VAR_063226" description="In FND1; dbSNP:rs121908167." evidence="4">
    <original>L</original>
    <variation>V</variation>
    <location>
        <position position="168"/>
    </location>
</feature>
<feature type="sequence variant" id="VAR_063227" description="In FND1; dbSNP:rs121908168." evidence="4">
    <original>R</original>
    <variation>W</variation>
    <location>
        <position position="183"/>
    </location>
</feature>
<feature type="sequence variant" id="VAR_063228" description="In FND1; dbSNP:rs121908170." evidence="4">
    <original>R</original>
    <variation>W</variation>
    <location>
        <position position="196"/>
    </location>
</feature>
<feature type="sequence variant" id="VAR_063229" description="In FND1; dbSNP:rs121908166." evidence="4">
    <original>N</original>
    <variation>S</variation>
    <location>
        <position position="203"/>
    </location>
</feature>
<feature type="sequence variant" id="VAR_047475" description="In dbSNP:rs12749726.">
    <original>P</original>
    <variation>A</variation>
    <location>
        <position position="234"/>
    </location>
</feature>
<feature type="sequence conflict" description="In Ref. 1; AAD01417." evidence="5" ref="1">
    <original>L</original>
    <variation>M</variation>
    <location>
        <position position="72"/>
    </location>
</feature>
<feature type="sequence conflict" description="In Ref. 1; AAD01417." evidence="5" ref="1">
    <original>F</original>
    <variation>L</variation>
    <location>
        <position position="86"/>
    </location>
</feature>
<feature type="sequence conflict" description="In Ref. 1; AAD01418." evidence="5" ref="1">
    <original>S</original>
    <variation>G</variation>
    <location>
        <position position="249"/>
    </location>
</feature>
<accession>O95076</accession>
<accession>O95075</accession>
<accession>Q5T8M4</accession>
<protein>
    <recommendedName>
        <fullName>Homeobox protein aristaless-like 3</fullName>
    </recommendedName>
    <alternativeName>
        <fullName>Proline-rich transcription factor ALX3</fullName>
    </alternativeName>
</protein>
<organism>
    <name type="scientific">Homo sapiens</name>
    <name type="common">Human</name>
    <dbReference type="NCBI Taxonomy" id="9606"/>
    <lineage>
        <taxon>Eukaryota</taxon>
        <taxon>Metazoa</taxon>
        <taxon>Chordata</taxon>
        <taxon>Craniata</taxon>
        <taxon>Vertebrata</taxon>
        <taxon>Euteleostomi</taxon>
        <taxon>Mammalia</taxon>
        <taxon>Eutheria</taxon>
        <taxon>Euarchontoglires</taxon>
        <taxon>Primates</taxon>
        <taxon>Haplorrhini</taxon>
        <taxon>Catarrhini</taxon>
        <taxon>Hominidae</taxon>
        <taxon>Homo</taxon>
    </lineage>
</organism>
<gene>
    <name type="primary">ALX3</name>
</gene>
<name>ALX3_HUMAN</name>
<evidence type="ECO:0000250" key="1"/>
<evidence type="ECO:0000255" key="2">
    <source>
        <dbReference type="PROSITE-ProRule" id="PRU00108"/>
    </source>
</evidence>
<evidence type="ECO:0000256" key="3">
    <source>
        <dbReference type="SAM" id="MobiDB-lite"/>
    </source>
</evidence>
<evidence type="ECO:0000269" key="4">
    <source>
    </source>
</evidence>
<evidence type="ECO:0000305" key="5"/>
<reference key="1">
    <citation type="journal article" date="2002" name="Genes Chromosomes Cancer">
        <title>Combined restriction landmark genomic scanning and virtual genome scans identify a novel human homeobox gene, ALX3, that is hypermethylated in neuroblastoma.</title>
        <authorList>
            <person name="Wimmer K."/>
            <person name="Zhu X.-X."/>
            <person name="Rouillard J.-M."/>
            <person name="Ambros P.F."/>
            <person name="Lamb B.J."/>
            <person name="Kuick R."/>
            <person name="Eckart M."/>
            <person name="Weinhausl A."/>
            <person name="Fonatsch C."/>
            <person name="Hanash S.M."/>
        </authorList>
    </citation>
    <scope>NUCLEOTIDE SEQUENCE [MRNA]</scope>
    <scope>NUCLEOTIDE SEQUENCE [GENOMIC DNA] OF 1-92</scope>
    <source>
        <tissue>Neuroblastoma</tissue>
    </source>
</reference>
<reference key="2">
    <citation type="journal article" date="2006" name="Nature">
        <title>The DNA sequence and biological annotation of human chromosome 1.</title>
        <authorList>
            <person name="Gregory S.G."/>
            <person name="Barlow K.F."/>
            <person name="McLay K.E."/>
            <person name="Kaul R."/>
            <person name="Swarbreck D."/>
            <person name="Dunham A."/>
            <person name="Scott C.E."/>
            <person name="Howe K.L."/>
            <person name="Woodfine K."/>
            <person name="Spencer C.C.A."/>
            <person name="Jones M.C."/>
            <person name="Gillson C."/>
            <person name="Searle S."/>
            <person name="Zhou Y."/>
            <person name="Kokocinski F."/>
            <person name="McDonald L."/>
            <person name="Evans R."/>
            <person name="Phillips K."/>
            <person name="Atkinson A."/>
            <person name="Cooper R."/>
            <person name="Jones C."/>
            <person name="Hall R.E."/>
            <person name="Andrews T.D."/>
            <person name="Lloyd C."/>
            <person name="Ainscough R."/>
            <person name="Almeida J.P."/>
            <person name="Ambrose K.D."/>
            <person name="Anderson F."/>
            <person name="Andrew R.W."/>
            <person name="Ashwell R.I.S."/>
            <person name="Aubin K."/>
            <person name="Babbage A.K."/>
            <person name="Bagguley C.L."/>
            <person name="Bailey J."/>
            <person name="Beasley H."/>
            <person name="Bethel G."/>
            <person name="Bird C.P."/>
            <person name="Bray-Allen S."/>
            <person name="Brown J.Y."/>
            <person name="Brown A.J."/>
            <person name="Buckley D."/>
            <person name="Burton J."/>
            <person name="Bye J."/>
            <person name="Carder C."/>
            <person name="Chapman J.C."/>
            <person name="Clark S.Y."/>
            <person name="Clarke G."/>
            <person name="Clee C."/>
            <person name="Cobley V."/>
            <person name="Collier R.E."/>
            <person name="Corby N."/>
            <person name="Coville G.J."/>
            <person name="Davies J."/>
            <person name="Deadman R."/>
            <person name="Dunn M."/>
            <person name="Earthrowl M."/>
            <person name="Ellington A.G."/>
            <person name="Errington H."/>
            <person name="Frankish A."/>
            <person name="Frankland J."/>
            <person name="French L."/>
            <person name="Garner P."/>
            <person name="Garnett J."/>
            <person name="Gay L."/>
            <person name="Ghori M.R.J."/>
            <person name="Gibson R."/>
            <person name="Gilby L.M."/>
            <person name="Gillett W."/>
            <person name="Glithero R.J."/>
            <person name="Grafham D.V."/>
            <person name="Griffiths C."/>
            <person name="Griffiths-Jones S."/>
            <person name="Grocock R."/>
            <person name="Hammond S."/>
            <person name="Harrison E.S.I."/>
            <person name="Hart E."/>
            <person name="Haugen E."/>
            <person name="Heath P.D."/>
            <person name="Holmes S."/>
            <person name="Holt K."/>
            <person name="Howden P.J."/>
            <person name="Hunt A.R."/>
            <person name="Hunt S.E."/>
            <person name="Hunter G."/>
            <person name="Isherwood J."/>
            <person name="James R."/>
            <person name="Johnson C."/>
            <person name="Johnson D."/>
            <person name="Joy A."/>
            <person name="Kay M."/>
            <person name="Kershaw J.K."/>
            <person name="Kibukawa M."/>
            <person name="Kimberley A.M."/>
            <person name="King A."/>
            <person name="Knights A.J."/>
            <person name="Lad H."/>
            <person name="Laird G."/>
            <person name="Lawlor S."/>
            <person name="Leongamornlert D.A."/>
            <person name="Lloyd D.M."/>
            <person name="Loveland J."/>
            <person name="Lovell J."/>
            <person name="Lush M.J."/>
            <person name="Lyne R."/>
            <person name="Martin S."/>
            <person name="Mashreghi-Mohammadi M."/>
            <person name="Matthews L."/>
            <person name="Matthews N.S.W."/>
            <person name="McLaren S."/>
            <person name="Milne S."/>
            <person name="Mistry S."/>
            <person name="Moore M.J.F."/>
            <person name="Nickerson T."/>
            <person name="O'Dell C.N."/>
            <person name="Oliver K."/>
            <person name="Palmeiri A."/>
            <person name="Palmer S.A."/>
            <person name="Parker A."/>
            <person name="Patel D."/>
            <person name="Pearce A.V."/>
            <person name="Peck A.I."/>
            <person name="Pelan S."/>
            <person name="Phelps K."/>
            <person name="Phillimore B.J."/>
            <person name="Plumb R."/>
            <person name="Rajan J."/>
            <person name="Raymond C."/>
            <person name="Rouse G."/>
            <person name="Saenphimmachak C."/>
            <person name="Sehra H.K."/>
            <person name="Sheridan E."/>
            <person name="Shownkeen R."/>
            <person name="Sims S."/>
            <person name="Skuce C.D."/>
            <person name="Smith M."/>
            <person name="Steward C."/>
            <person name="Subramanian S."/>
            <person name="Sycamore N."/>
            <person name="Tracey A."/>
            <person name="Tromans A."/>
            <person name="Van Helmond Z."/>
            <person name="Wall M."/>
            <person name="Wallis J.M."/>
            <person name="White S."/>
            <person name="Whitehead S.L."/>
            <person name="Wilkinson J.E."/>
            <person name="Willey D.L."/>
            <person name="Williams H."/>
            <person name="Wilming L."/>
            <person name="Wray P.W."/>
            <person name="Wu Z."/>
            <person name="Coulson A."/>
            <person name="Vaudin M."/>
            <person name="Sulston J.E."/>
            <person name="Durbin R.M."/>
            <person name="Hubbard T."/>
            <person name="Wooster R."/>
            <person name="Dunham I."/>
            <person name="Carter N.P."/>
            <person name="McVean G."/>
            <person name="Ross M.T."/>
            <person name="Harrow J."/>
            <person name="Olson M.V."/>
            <person name="Beck S."/>
            <person name="Rogers J."/>
            <person name="Bentley D.R."/>
        </authorList>
    </citation>
    <scope>NUCLEOTIDE SEQUENCE [LARGE SCALE GENOMIC DNA]</scope>
</reference>
<reference key="3">
    <citation type="submission" date="2005-07" db="EMBL/GenBank/DDBJ databases">
        <authorList>
            <person name="Mural R.J."/>
            <person name="Istrail S."/>
            <person name="Sutton G.G."/>
            <person name="Florea L."/>
            <person name="Halpern A.L."/>
            <person name="Mobarry C.M."/>
            <person name="Lippert R."/>
            <person name="Walenz B."/>
            <person name="Shatkay H."/>
            <person name="Dew I."/>
            <person name="Miller J.R."/>
            <person name="Flanigan M.J."/>
            <person name="Edwards N.J."/>
            <person name="Bolanos R."/>
            <person name="Fasulo D."/>
            <person name="Halldorsson B.V."/>
            <person name="Hannenhalli S."/>
            <person name="Turner R."/>
            <person name="Yooseph S."/>
            <person name="Lu F."/>
            <person name="Nusskern D.R."/>
            <person name="Shue B.C."/>
            <person name="Zheng X.H."/>
            <person name="Zhong F."/>
            <person name="Delcher A.L."/>
            <person name="Huson D.H."/>
            <person name="Kravitz S.A."/>
            <person name="Mouchard L."/>
            <person name="Reinert K."/>
            <person name="Remington K.A."/>
            <person name="Clark A.G."/>
            <person name="Waterman M.S."/>
            <person name="Eichler E.E."/>
            <person name="Adams M.D."/>
            <person name="Hunkapiller M.W."/>
            <person name="Myers E.W."/>
            <person name="Venter J.C."/>
        </authorList>
    </citation>
    <scope>NUCLEOTIDE SEQUENCE [LARGE SCALE GENOMIC DNA]</scope>
</reference>
<reference key="4">
    <citation type="journal article" date="2004" name="Genome Res.">
        <title>The status, quality, and expansion of the NIH full-length cDNA project: the Mammalian Gene Collection (MGC).</title>
        <authorList>
            <consortium name="The MGC Project Team"/>
        </authorList>
    </citation>
    <scope>NUCLEOTIDE SEQUENCE [LARGE SCALE MRNA]</scope>
    <source>
        <tissue>Brain</tissue>
    </source>
</reference>
<reference key="5">
    <citation type="journal article" date="2009" name="Am. J. Hum. Genet.">
        <title>Frontorhiny, a distinctive presentation of frontonasal dysplasia caused by recessive mutations in the ALX3 homeobox gene.</title>
        <authorList>
            <person name="Twigg S.R.F."/>
            <person name="Versnel S.L."/>
            <person name="Nuernberg G."/>
            <person name="Lees M.M."/>
            <person name="Bhat M."/>
            <person name="Hammond P."/>
            <person name="Hennekam R.C.M."/>
            <person name="Hoogeboom A.J."/>
            <person name="Hurst J.A."/>
            <person name="Johnson D."/>
            <person name="Robinson A.A."/>
            <person name="Scambler P.J."/>
            <person name="Gerrelli D."/>
            <person name="Nuernberg P."/>
            <person name="Mathijssen I.M.J."/>
            <person name="Wilkie A.O.M."/>
        </authorList>
    </citation>
    <scope>VARIANTS FND1 VAL-168; TRP-183; TRP-196 AND SER-203</scope>
</reference>
<dbReference type="EMBL" id="AF008202">
    <property type="protein sequence ID" value="AAD01417.2"/>
    <property type="molecule type" value="Genomic_DNA"/>
</dbReference>
<dbReference type="EMBL" id="AF008203">
    <property type="protein sequence ID" value="AAD01418.1"/>
    <property type="molecule type" value="mRNA"/>
</dbReference>
<dbReference type="EMBL" id="AL160006">
    <property type="status" value="NOT_ANNOTATED_CDS"/>
    <property type="molecule type" value="Genomic_DNA"/>
</dbReference>
<dbReference type="EMBL" id="CH471122">
    <property type="protein sequence ID" value="EAW56430.1"/>
    <property type="molecule type" value="Genomic_DNA"/>
</dbReference>
<dbReference type="EMBL" id="BC112007">
    <property type="protein sequence ID" value="AAI12008.1"/>
    <property type="molecule type" value="mRNA"/>
</dbReference>
<dbReference type="EMBL" id="BC113428">
    <property type="protein sequence ID" value="AAI13429.1"/>
    <property type="molecule type" value="mRNA"/>
</dbReference>
<dbReference type="CCDS" id="CCDS819.1"/>
<dbReference type="RefSeq" id="NP_006483.2">
    <property type="nucleotide sequence ID" value="NM_006492.3"/>
</dbReference>
<dbReference type="SMR" id="O95076"/>
<dbReference type="BioGRID" id="106755">
    <property type="interactions" value="22"/>
</dbReference>
<dbReference type="FunCoup" id="O95076">
    <property type="interactions" value="232"/>
</dbReference>
<dbReference type="IntAct" id="O95076">
    <property type="interactions" value="19"/>
</dbReference>
<dbReference type="STRING" id="9606.ENSP00000497310"/>
<dbReference type="GlyGen" id="O95076">
    <property type="glycosylation" value="1 site"/>
</dbReference>
<dbReference type="iPTMnet" id="O95076"/>
<dbReference type="PhosphoSitePlus" id="O95076"/>
<dbReference type="BioMuta" id="ALX3"/>
<dbReference type="jPOST" id="O95076"/>
<dbReference type="MassIVE" id="O95076"/>
<dbReference type="PaxDb" id="9606-ENSP00000358807"/>
<dbReference type="PeptideAtlas" id="O95076"/>
<dbReference type="Antibodypedia" id="33780">
    <property type="antibodies" value="132 antibodies from 28 providers"/>
</dbReference>
<dbReference type="DNASU" id="257"/>
<dbReference type="Ensembl" id="ENST00000647563.2">
    <property type="protein sequence ID" value="ENSP00000497310.1"/>
    <property type="gene ID" value="ENSG00000156150.9"/>
</dbReference>
<dbReference type="GeneID" id="257"/>
<dbReference type="KEGG" id="hsa:257"/>
<dbReference type="MANE-Select" id="ENST00000647563.2">
    <property type="protein sequence ID" value="ENSP00000497310.1"/>
    <property type="RefSeq nucleotide sequence ID" value="NM_006492.3"/>
    <property type="RefSeq protein sequence ID" value="NP_006483.2"/>
</dbReference>
<dbReference type="UCSC" id="uc001dzb.4">
    <property type="organism name" value="human"/>
</dbReference>
<dbReference type="AGR" id="HGNC:449"/>
<dbReference type="CTD" id="257"/>
<dbReference type="DisGeNET" id="257"/>
<dbReference type="GeneCards" id="ALX3"/>
<dbReference type="HGNC" id="HGNC:449">
    <property type="gene designation" value="ALX3"/>
</dbReference>
<dbReference type="HPA" id="ENSG00000156150">
    <property type="expression patterns" value="Tissue enhanced (skin)"/>
</dbReference>
<dbReference type="MalaCards" id="ALX3"/>
<dbReference type="MIM" id="136760">
    <property type="type" value="phenotype"/>
</dbReference>
<dbReference type="MIM" id="606014">
    <property type="type" value="gene"/>
</dbReference>
<dbReference type="neXtProt" id="NX_O95076"/>
<dbReference type="OpenTargets" id="ENSG00000156150"/>
<dbReference type="Orphanet" id="391474">
    <property type="disease" value="Frontorhiny"/>
</dbReference>
<dbReference type="PharmGKB" id="PA24754"/>
<dbReference type="VEuPathDB" id="HostDB:ENSG00000156150"/>
<dbReference type="eggNOG" id="KOG0490">
    <property type="taxonomic scope" value="Eukaryota"/>
</dbReference>
<dbReference type="GeneTree" id="ENSGT00940000160669"/>
<dbReference type="HOGENOM" id="CLU_059011_0_0_1"/>
<dbReference type="InParanoid" id="O95076"/>
<dbReference type="OMA" id="GSHFYEG"/>
<dbReference type="OrthoDB" id="6159439at2759"/>
<dbReference type="PAN-GO" id="O95076">
    <property type="GO annotations" value="3 GO annotations based on evolutionary models"/>
</dbReference>
<dbReference type="PhylomeDB" id="O95076"/>
<dbReference type="TreeFam" id="TF350743"/>
<dbReference type="PathwayCommons" id="O95076"/>
<dbReference type="Reactome" id="R-HSA-9856649">
    <property type="pathway name" value="Transcriptional and post-translational regulation of MITF-M expression and activity"/>
</dbReference>
<dbReference type="SignaLink" id="O95076"/>
<dbReference type="BioGRID-ORCS" id="257">
    <property type="hits" value="64 hits in 1177 CRISPR screens"/>
</dbReference>
<dbReference type="ChiTaRS" id="ALX3">
    <property type="organism name" value="human"/>
</dbReference>
<dbReference type="GenomeRNAi" id="257"/>
<dbReference type="Pharos" id="O95076">
    <property type="development level" value="Tbio"/>
</dbReference>
<dbReference type="PRO" id="PR:O95076"/>
<dbReference type="Proteomes" id="UP000005640">
    <property type="component" value="Chromosome 1"/>
</dbReference>
<dbReference type="RNAct" id="O95076">
    <property type="molecule type" value="protein"/>
</dbReference>
<dbReference type="Bgee" id="ENSG00000156150">
    <property type="expression patterns" value="Expressed in male germ line stem cell (sensu Vertebrata) in testis and 51 other cell types or tissues"/>
</dbReference>
<dbReference type="ExpressionAtlas" id="O95076">
    <property type="expression patterns" value="baseline and differential"/>
</dbReference>
<dbReference type="GO" id="GO:0000785">
    <property type="term" value="C:chromatin"/>
    <property type="evidence" value="ECO:0000247"/>
    <property type="project" value="NTNU_SB"/>
</dbReference>
<dbReference type="GO" id="GO:0005634">
    <property type="term" value="C:nucleus"/>
    <property type="evidence" value="ECO:0007669"/>
    <property type="project" value="UniProtKB-SubCell"/>
</dbReference>
<dbReference type="GO" id="GO:0000981">
    <property type="term" value="F:DNA-binding transcription factor activity, RNA polymerase II-specific"/>
    <property type="evidence" value="ECO:0000247"/>
    <property type="project" value="NTNU_SB"/>
</dbReference>
<dbReference type="GO" id="GO:0000977">
    <property type="term" value="F:RNA polymerase II transcription regulatory region sequence-specific DNA binding"/>
    <property type="evidence" value="ECO:0000318"/>
    <property type="project" value="GO_Central"/>
</dbReference>
<dbReference type="GO" id="GO:1990837">
    <property type="term" value="F:sequence-specific double-stranded DNA binding"/>
    <property type="evidence" value="ECO:0000314"/>
    <property type="project" value="ARUK-UCL"/>
</dbReference>
<dbReference type="GO" id="GO:0035115">
    <property type="term" value="P:embryonic forelimb morphogenesis"/>
    <property type="evidence" value="ECO:0007669"/>
    <property type="project" value="Ensembl"/>
</dbReference>
<dbReference type="GO" id="GO:0035116">
    <property type="term" value="P:embryonic hindlimb morphogenesis"/>
    <property type="evidence" value="ECO:0007669"/>
    <property type="project" value="Ensembl"/>
</dbReference>
<dbReference type="GO" id="GO:0048704">
    <property type="term" value="P:embryonic skeletal system morphogenesis"/>
    <property type="evidence" value="ECO:0007669"/>
    <property type="project" value="Ensembl"/>
</dbReference>
<dbReference type="GO" id="GO:0007389">
    <property type="term" value="P:pattern specification process"/>
    <property type="evidence" value="ECO:0007669"/>
    <property type="project" value="Ensembl"/>
</dbReference>
<dbReference type="GO" id="GO:0042981">
    <property type="term" value="P:regulation of apoptotic process"/>
    <property type="evidence" value="ECO:0007669"/>
    <property type="project" value="Ensembl"/>
</dbReference>
<dbReference type="GO" id="GO:0006357">
    <property type="term" value="P:regulation of transcription by RNA polymerase II"/>
    <property type="evidence" value="ECO:0000318"/>
    <property type="project" value="GO_Central"/>
</dbReference>
<dbReference type="CDD" id="cd00086">
    <property type="entry name" value="homeodomain"/>
    <property type="match status" value="1"/>
</dbReference>
<dbReference type="FunFam" id="1.10.10.60:FF:000093">
    <property type="entry name" value="ALX homeobox protein 1"/>
    <property type="match status" value="1"/>
</dbReference>
<dbReference type="Gene3D" id="1.10.10.60">
    <property type="entry name" value="Homeodomain-like"/>
    <property type="match status" value="1"/>
</dbReference>
<dbReference type="InterPro" id="IPR001356">
    <property type="entry name" value="HD"/>
</dbReference>
<dbReference type="InterPro" id="IPR017970">
    <property type="entry name" value="Homeobox_CS"/>
</dbReference>
<dbReference type="InterPro" id="IPR009057">
    <property type="entry name" value="Homeodomain-like_sf"/>
</dbReference>
<dbReference type="InterPro" id="IPR050649">
    <property type="entry name" value="Paired_Homeobox_TFs"/>
</dbReference>
<dbReference type="PANTHER" id="PTHR24329">
    <property type="entry name" value="HOMEOBOX PROTEIN ARISTALESS"/>
    <property type="match status" value="1"/>
</dbReference>
<dbReference type="PANTHER" id="PTHR24329:SF578">
    <property type="entry name" value="HOMEOBOX PROTEIN ARISTALESS-LIKE 3"/>
    <property type="match status" value="1"/>
</dbReference>
<dbReference type="Pfam" id="PF00046">
    <property type="entry name" value="Homeodomain"/>
    <property type="match status" value="1"/>
</dbReference>
<dbReference type="SMART" id="SM00389">
    <property type="entry name" value="HOX"/>
    <property type="match status" value="1"/>
</dbReference>
<dbReference type="SUPFAM" id="SSF46689">
    <property type="entry name" value="Homeodomain-like"/>
    <property type="match status" value="1"/>
</dbReference>
<dbReference type="PROSITE" id="PS00027">
    <property type="entry name" value="HOMEOBOX_1"/>
    <property type="match status" value="1"/>
</dbReference>
<dbReference type="PROSITE" id="PS50071">
    <property type="entry name" value="HOMEOBOX_2"/>
    <property type="match status" value="1"/>
</dbReference>
<comment type="function">
    <text evidence="1">Transcriptional regulator with a possible role in patterning of mesoderm during development.</text>
</comment>
<comment type="subcellular location">
    <subcellularLocation>
        <location evidence="2">Nucleus</location>
    </subcellularLocation>
</comment>
<comment type="disease" evidence="4">
    <disease id="DI-02575">
        <name>Frontonasal dysplasia 1</name>
        <acronym>FND1</acronym>
        <description>The term frontonasal dysplasia describes an array of abnormalities affecting the eyes, forehead and nose and linked to midfacial dysraphia. The clinical picture is highly variable. Major findings include true ocular hypertelorism; broadening of the nasal root; median facial cleft affecting the nose and/or upper lip and palate; unilateral or bilateral clefting of the alae nasi; lack of formation of the nasal tip; anterior cranium bifidum occultum; a V-shaped or widow's peak frontal hairline.</description>
        <dbReference type="MIM" id="136760"/>
    </disease>
    <text>The disease is caused by variants affecting the gene represented in this entry.</text>
</comment>
<comment type="similarity">
    <text evidence="5">Belongs to the paired homeobox family.</text>
</comment>
<proteinExistence type="evidence at protein level"/>
<sequence>MDPEHCAPFRVGPAPGPYVASGDEPPGPQGTPAAAPHLHPAPPRGPRLTRFPACGPLEPYLPEPAKPPAKYLQDLGPGPALNGGHFYEGPAEAEEKTSKAASFPQLPLDCRGGPRDGPSNLQGSPGPCLASLHLPLSPGLPDSMELAKNKSKKRRNRTTFSTFQLEELEKVFQKTHYPDVYAREQLALRTDLTEARVQVWFQNRRAKWRKRERYGKIQEGRNPFTAAYDISVLPRTDSHPQLQNSLWASPGSGSPGGPCLVSPEGIPSPCMSPYSHPHGSVAGFMGVPAPSAAHPGIYSIHGFPPTLGGHSFEPSSDGDYKSPSLVSLRVKPKEPPGLLNWTT</sequence>